<keyword id="KW-0687">Ribonucleoprotein</keyword>
<keyword id="KW-0689">Ribosomal protein</keyword>
<keyword id="KW-0694">RNA-binding</keyword>
<keyword id="KW-0699">rRNA-binding</keyword>
<comment type="function">
    <text evidence="1">Binds directly to 16S ribosomal RNA.</text>
</comment>
<comment type="similarity">
    <text evidence="1">Belongs to the bacterial ribosomal protein bS20 family.</text>
</comment>
<dbReference type="EMBL" id="AM933173">
    <property type="protein sequence ID" value="CAR35954.1"/>
    <property type="molecule type" value="Genomic_DNA"/>
</dbReference>
<dbReference type="RefSeq" id="WP_001575564.1">
    <property type="nucleotide sequence ID" value="NC_011274.1"/>
</dbReference>
<dbReference type="SMR" id="B5RF40"/>
<dbReference type="KEGG" id="seg:SG0047"/>
<dbReference type="HOGENOM" id="CLU_160655_4_0_6"/>
<dbReference type="Proteomes" id="UP000008321">
    <property type="component" value="Chromosome"/>
</dbReference>
<dbReference type="GO" id="GO:0005829">
    <property type="term" value="C:cytosol"/>
    <property type="evidence" value="ECO:0007669"/>
    <property type="project" value="TreeGrafter"/>
</dbReference>
<dbReference type="GO" id="GO:0015935">
    <property type="term" value="C:small ribosomal subunit"/>
    <property type="evidence" value="ECO:0007669"/>
    <property type="project" value="TreeGrafter"/>
</dbReference>
<dbReference type="GO" id="GO:0070181">
    <property type="term" value="F:small ribosomal subunit rRNA binding"/>
    <property type="evidence" value="ECO:0007669"/>
    <property type="project" value="TreeGrafter"/>
</dbReference>
<dbReference type="GO" id="GO:0003735">
    <property type="term" value="F:structural constituent of ribosome"/>
    <property type="evidence" value="ECO:0007669"/>
    <property type="project" value="InterPro"/>
</dbReference>
<dbReference type="GO" id="GO:0006412">
    <property type="term" value="P:translation"/>
    <property type="evidence" value="ECO:0007669"/>
    <property type="project" value="UniProtKB-UniRule"/>
</dbReference>
<dbReference type="FunFam" id="1.20.58.110:FF:000001">
    <property type="entry name" value="30S ribosomal protein S20"/>
    <property type="match status" value="1"/>
</dbReference>
<dbReference type="Gene3D" id="1.20.58.110">
    <property type="entry name" value="Ribosomal protein S20"/>
    <property type="match status" value="1"/>
</dbReference>
<dbReference type="HAMAP" id="MF_00500">
    <property type="entry name" value="Ribosomal_bS20"/>
    <property type="match status" value="1"/>
</dbReference>
<dbReference type="InterPro" id="IPR002583">
    <property type="entry name" value="Ribosomal_bS20"/>
</dbReference>
<dbReference type="InterPro" id="IPR036510">
    <property type="entry name" value="Ribosomal_bS20_sf"/>
</dbReference>
<dbReference type="NCBIfam" id="TIGR00029">
    <property type="entry name" value="S20"/>
    <property type="match status" value="1"/>
</dbReference>
<dbReference type="PANTHER" id="PTHR33398">
    <property type="entry name" value="30S RIBOSOMAL PROTEIN S20"/>
    <property type="match status" value="1"/>
</dbReference>
<dbReference type="PANTHER" id="PTHR33398:SF1">
    <property type="entry name" value="SMALL RIBOSOMAL SUBUNIT PROTEIN BS20C"/>
    <property type="match status" value="1"/>
</dbReference>
<dbReference type="Pfam" id="PF01649">
    <property type="entry name" value="Ribosomal_S20p"/>
    <property type="match status" value="1"/>
</dbReference>
<dbReference type="SUPFAM" id="SSF46992">
    <property type="entry name" value="Ribosomal protein S20"/>
    <property type="match status" value="1"/>
</dbReference>
<gene>
    <name evidence="1" type="primary">rpsT</name>
    <name type="ordered locus">SG0047</name>
</gene>
<reference key="1">
    <citation type="journal article" date="2008" name="Genome Res.">
        <title>Comparative genome analysis of Salmonella enteritidis PT4 and Salmonella gallinarum 287/91 provides insights into evolutionary and host adaptation pathways.</title>
        <authorList>
            <person name="Thomson N.R."/>
            <person name="Clayton D.J."/>
            <person name="Windhorst D."/>
            <person name="Vernikos G."/>
            <person name="Davidson S."/>
            <person name="Churcher C."/>
            <person name="Quail M.A."/>
            <person name="Stevens M."/>
            <person name="Jones M.A."/>
            <person name="Watson M."/>
            <person name="Barron A."/>
            <person name="Layton A."/>
            <person name="Pickard D."/>
            <person name="Kingsley R.A."/>
            <person name="Bignell A."/>
            <person name="Clark L."/>
            <person name="Harris B."/>
            <person name="Ormond D."/>
            <person name="Abdellah Z."/>
            <person name="Brooks K."/>
            <person name="Cherevach I."/>
            <person name="Chillingworth T."/>
            <person name="Woodward J."/>
            <person name="Norberczak H."/>
            <person name="Lord A."/>
            <person name="Arrowsmith C."/>
            <person name="Jagels K."/>
            <person name="Moule S."/>
            <person name="Mungall K."/>
            <person name="Saunders M."/>
            <person name="Whitehead S."/>
            <person name="Chabalgoity J.A."/>
            <person name="Maskell D."/>
            <person name="Humphreys T."/>
            <person name="Roberts M."/>
            <person name="Barrow P.A."/>
            <person name="Dougan G."/>
            <person name="Parkhill J."/>
        </authorList>
    </citation>
    <scope>NUCLEOTIDE SEQUENCE [LARGE SCALE GENOMIC DNA]</scope>
    <source>
        <strain>287/91 / NCTC 13346</strain>
    </source>
</reference>
<accession>B5RF40</accession>
<evidence type="ECO:0000255" key="1">
    <source>
        <dbReference type="HAMAP-Rule" id="MF_00500"/>
    </source>
</evidence>
<evidence type="ECO:0000256" key="2">
    <source>
        <dbReference type="SAM" id="MobiDB-lite"/>
    </source>
</evidence>
<evidence type="ECO:0000305" key="3"/>
<feature type="chain" id="PRO_1000126507" description="Small ribosomal subunit protein bS20">
    <location>
        <begin position="1"/>
        <end position="87"/>
    </location>
</feature>
<feature type="region of interest" description="Disordered" evidence="2">
    <location>
        <begin position="1"/>
        <end position="26"/>
    </location>
</feature>
<proteinExistence type="inferred from homology"/>
<name>RS20_SALG2</name>
<protein>
    <recommendedName>
        <fullName evidence="1">Small ribosomal subunit protein bS20</fullName>
    </recommendedName>
    <alternativeName>
        <fullName evidence="3">30S ribosomal protein S20</fullName>
    </alternativeName>
</protein>
<organism>
    <name type="scientific">Salmonella gallinarum (strain 287/91 / NCTC 13346)</name>
    <dbReference type="NCBI Taxonomy" id="550538"/>
    <lineage>
        <taxon>Bacteria</taxon>
        <taxon>Pseudomonadati</taxon>
        <taxon>Pseudomonadota</taxon>
        <taxon>Gammaproteobacteria</taxon>
        <taxon>Enterobacterales</taxon>
        <taxon>Enterobacteriaceae</taxon>
        <taxon>Salmonella</taxon>
    </lineage>
</organism>
<sequence>MANIKSAKKRAVQSEKARKHNASRRSMMRTFIKKVYAAIEAGDKAAALKAFNEMQPIVDRQAVKGLIHKNKAARHKANLTAQINKLA</sequence>